<accession>A3CK73</accession>
<comment type="function">
    <text evidence="1">Binds to 23S rRNA. Forms part of two intersubunit bridges in the 70S ribosome.</text>
</comment>
<comment type="subunit">
    <text evidence="1">Part of the 50S ribosomal subunit. Forms a cluster with proteins L3 and L19. In the 70S ribosome, L14 and L19 interact and together make contacts with the 16S rRNA in bridges B5 and B8.</text>
</comment>
<comment type="similarity">
    <text evidence="1">Belongs to the universal ribosomal protein uL14 family.</text>
</comment>
<dbReference type="EMBL" id="CP000387">
    <property type="protein sequence ID" value="ABN43578.1"/>
    <property type="molecule type" value="Genomic_DNA"/>
</dbReference>
<dbReference type="RefSeq" id="WP_002894494.1">
    <property type="nucleotide sequence ID" value="NZ_CAXTYR010000005.1"/>
</dbReference>
<dbReference type="RefSeq" id="YP_001034128.1">
    <property type="nucleotide sequence ID" value="NC_009009.1"/>
</dbReference>
<dbReference type="SMR" id="A3CK73"/>
<dbReference type="STRING" id="388919.SSA_0117"/>
<dbReference type="GeneID" id="93920914"/>
<dbReference type="KEGG" id="ssa:SSA_0117"/>
<dbReference type="PATRIC" id="fig|388919.9.peg.110"/>
<dbReference type="eggNOG" id="COG0093">
    <property type="taxonomic scope" value="Bacteria"/>
</dbReference>
<dbReference type="HOGENOM" id="CLU_095071_2_1_9"/>
<dbReference type="OrthoDB" id="9806379at2"/>
<dbReference type="PRO" id="PR:A3CK73"/>
<dbReference type="Proteomes" id="UP000002148">
    <property type="component" value="Chromosome"/>
</dbReference>
<dbReference type="GO" id="GO:0022625">
    <property type="term" value="C:cytosolic large ribosomal subunit"/>
    <property type="evidence" value="ECO:0007669"/>
    <property type="project" value="TreeGrafter"/>
</dbReference>
<dbReference type="GO" id="GO:0070180">
    <property type="term" value="F:large ribosomal subunit rRNA binding"/>
    <property type="evidence" value="ECO:0007669"/>
    <property type="project" value="TreeGrafter"/>
</dbReference>
<dbReference type="GO" id="GO:0003735">
    <property type="term" value="F:structural constituent of ribosome"/>
    <property type="evidence" value="ECO:0007669"/>
    <property type="project" value="InterPro"/>
</dbReference>
<dbReference type="GO" id="GO:0006412">
    <property type="term" value="P:translation"/>
    <property type="evidence" value="ECO:0007669"/>
    <property type="project" value="UniProtKB-UniRule"/>
</dbReference>
<dbReference type="CDD" id="cd00337">
    <property type="entry name" value="Ribosomal_uL14"/>
    <property type="match status" value="1"/>
</dbReference>
<dbReference type="FunFam" id="2.40.150.20:FF:000001">
    <property type="entry name" value="50S ribosomal protein L14"/>
    <property type="match status" value="1"/>
</dbReference>
<dbReference type="Gene3D" id="2.40.150.20">
    <property type="entry name" value="Ribosomal protein L14"/>
    <property type="match status" value="1"/>
</dbReference>
<dbReference type="HAMAP" id="MF_01367">
    <property type="entry name" value="Ribosomal_uL14"/>
    <property type="match status" value="1"/>
</dbReference>
<dbReference type="InterPro" id="IPR000218">
    <property type="entry name" value="Ribosomal_uL14"/>
</dbReference>
<dbReference type="InterPro" id="IPR005745">
    <property type="entry name" value="Ribosomal_uL14_bac-type"/>
</dbReference>
<dbReference type="InterPro" id="IPR019972">
    <property type="entry name" value="Ribosomal_uL14_CS"/>
</dbReference>
<dbReference type="InterPro" id="IPR036853">
    <property type="entry name" value="Ribosomal_uL14_sf"/>
</dbReference>
<dbReference type="NCBIfam" id="TIGR01067">
    <property type="entry name" value="rplN_bact"/>
    <property type="match status" value="1"/>
</dbReference>
<dbReference type="PANTHER" id="PTHR11761">
    <property type="entry name" value="50S/60S RIBOSOMAL PROTEIN L14/L23"/>
    <property type="match status" value="1"/>
</dbReference>
<dbReference type="PANTHER" id="PTHR11761:SF3">
    <property type="entry name" value="LARGE RIBOSOMAL SUBUNIT PROTEIN UL14M"/>
    <property type="match status" value="1"/>
</dbReference>
<dbReference type="Pfam" id="PF00238">
    <property type="entry name" value="Ribosomal_L14"/>
    <property type="match status" value="1"/>
</dbReference>
<dbReference type="SMART" id="SM01374">
    <property type="entry name" value="Ribosomal_L14"/>
    <property type="match status" value="1"/>
</dbReference>
<dbReference type="SUPFAM" id="SSF50193">
    <property type="entry name" value="Ribosomal protein L14"/>
    <property type="match status" value="1"/>
</dbReference>
<dbReference type="PROSITE" id="PS00049">
    <property type="entry name" value="RIBOSOMAL_L14"/>
    <property type="match status" value="1"/>
</dbReference>
<proteinExistence type="inferred from homology"/>
<evidence type="ECO:0000255" key="1">
    <source>
        <dbReference type="HAMAP-Rule" id="MF_01367"/>
    </source>
</evidence>
<evidence type="ECO:0000305" key="2"/>
<sequence length="122" mass="13049">MIQTETRLKVADNSGAREILTIKVLGGSGRKFANIGDVIVASVKQATPGGAVKKGDVVKAVIVRTKSGARRKDGSYIKFDENAAVIIREDKTPRGTRIFGPVARELRDGGFMKIVSLAPEVL</sequence>
<reference key="1">
    <citation type="journal article" date="2007" name="J. Bacteriol.">
        <title>Genome of the opportunistic pathogen Streptococcus sanguinis.</title>
        <authorList>
            <person name="Xu P."/>
            <person name="Alves J.M."/>
            <person name="Kitten T."/>
            <person name="Brown A."/>
            <person name="Chen Z."/>
            <person name="Ozaki L.S."/>
            <person name="Manque P."/>
            <person name="Ge X."/>
            <person name="Serrano M.G."/>
            <person name="Puiu D."/>
            <person name="Hendricks S."/>
            <person name="Wang Y."/>
            <person name="Chaplin M.D."/>
            <person name="Akan D."/>
            <person name="Paik S."/>
            <person name="Peterson D.L."/>
            <person name="Macrina F.L."/>
            <person name="Buck G.A."/>
        </authorList>
    </citation>
    <scope>NUCLEOTIDE SEQUENCE [LARGE SCALE GENOMIC DNA]</scope>
    <source>
        <strain>SK36</strain>
    </source>
</reference>
<feature type="chain" id="PRO_1000055726" description="Large ribosomal subunit protein uL14">
    <location>
        <begin position="1"/>
        <end position="122"/>
    </location>
</feature>
<gene>
    <name evidence="1" type="primary">rplN</name>
    <name type="ordered locus">SSA_0117</name>
</gene>
<name>RL14_STRSV</name>
<protein>
    <recommendedName>
        <fullName evidence="1">Large ribosomal subunit protein uL14</fullName>
    </recommendedName>
    <alternativeName>
        <fullName evidence="2">50S ribosomal protein L14</fullName>
    </alternativeName>
</protein>
<keyword id="KW-1185">Reference proteome</keyword>
<keyword id="KW-0687">Ribonucleoprotein</keyword>
<keyword id="KW-0689">Ribosomal protein</keyword>
<keyword id="KW-0694">RNA-binding</keyword>
<keyword id="KW-0699">rRNA-binding</keyword>
<organism>
    <name type="scientific">Streptococcus sanguinis (strain SK36)</name>
    <dbReference type="NCBI Taxonomy" id="388919"/>
    <lineage>
        <taxon>Bacteria</taxon>
        <taxon>Bacillati</taxon>
        <taxon>Bacillota</taxon>
        <taxon>Bacilli</taxon>
        <taxon>Lactobacillales</taxon>
        <taxon>Streptococcaceae</taxon>
        <taxon>Streptococcus</taxon>
    </lineage>
</organism>